<accession>B7KIU2</accession>
<gene>
    <name evidence="2" type="primary">infB</name>
    <name type="ordered locus">PCC7424_2357</name>
</gene>
<proteinExistence type="inferred from homology"/>
<name>IF2_GLOC7</name>
<reference key="1">
    <citation type="journal article" date="2011" name="MBio">
        <title>Novel metabolic attributes of the genus Cyanothece, comprising a group of unicellular nitrogen-fixing Cyanobacteria.</title>
        <authorList>
            <person name="Bandyopadhyay A."/>
            <person name="Elvitigala T."/>
            <person name="Welsh E."/>
            <person name="Stockel J."/>
            <person name="Liberton M."/>
            <person name="Min H."/>
            <person name="Sherman L.A."/>
            <person name="Pakrasi H.B."/>
        </authorList>
    </citation>
    <scope>NUCLEOTIDE SEQUENCE [LARGE SCALE GENOMIC DNA]</scope>
    <source>
        <strain>PCC 7424</strain>
    </source>
</reference>
<protein>
    <recommendedName>
        <fullName evidence="2">Translation initiation factor IF-2</fullName>
    </recommendedName>
</protein>
<organism>
    <name type="scientific">Gloeothece citriformis (strain PCC 7424)</name>
    <name type="common">Cyanothece sp. (strain PCC 7424)</name>
    <dbReference type="NCBI Taxonomy" id="65393"/>
    <lineage>
        <taxon>Bacteria</taxon>
        <taxon>Bacillati</taxon>
        <taxon>Cyanobacteriota</taxon>
        <taxon>Cyanophyceae</taxon>
        <taxon>Oscillatoriophycideae</taxon>
        <taxon>Chroococcales</taxon>
        <taxon>Aphanothecaceae</taxon>
        <taxon>Gloeothece</taxon>
        <taxon>Gloeothece citriformis</taxon>
    </lineage>
</organism>
<keyword id="KW-0963">Cytoplasm</keyword>
<keyword id="KW-0342">GTP-binding</keyword>
<keyword id="KW-0396">Initiation factor</keyword>
<keyword id="KW-0547">Nucleotide-binding</keyword>
<keyword id="KW-0648">Protein biosynthesis</keyword>
<keyword id="KW-1185">Reference proteome</keyword>
<sequence length="1101" mass="121652">MSNSKVRIYELSKELNLDNKDILEICDQLNIAVKSHSSTITESQAERIKAKAEKLNHQMAGKIHSGSGIDRGQNLAKERKQEILAIHHKPNRPFSSTDAPVGSGQSSPLIEPPRPPMKPQPPSPSRSEVTSPITDEPVSTQEDTNGSSSSHEREPQSPMSPFDQQQPEQNTTDHNQEQQNQLKYNQEQSNQLEQESAISSELSEVNVSKLLRPPVRPSEKPASVPSPSKEKEAKSNEPTKAQPIISPKENKSHSKENKLKLPSDIKPKPNKDKDRDGKKPDKEKDKKSLSPQPKVKRESREQREPRESREQREPRESREQREPRESREQREPKLSTELKRPTPPKPPQKPKQAEVAALAIEPEDVEDTAEDLLEEDPLEALTQKPKLKRPTPPKVGKRQNWDEEEEETEEGKGKAGKAAKAGKNKRRQLLLEDEDDFDSDLEEILEIPTAVSISTARPPKPKSMKPAASGNGASKNVKAPTKAEPGRGKSAERERSERKDRKEQPQRAETLVLDKTMTVRELAERLGIAETEIIRILFFKGIAVNITQTLDFDTIQAIAEELEVQIESPEVKAAATKTTEMLDANDLENLHRRPPVVTIMGHVDHGKTTLLDSIRKTKVAQGEAGGITQHIGAYHVDIEHEGKQEQIVFLDTPGHEAFTAMRARGARVTDIAILVVAADDGVQPQTREAISHARAAEVPIVVAINKIDKPESNPDRIKQELSELSLVPEEWGGETIMVPVSALKGENLDTLLEMLLLVAEVGELSANPDRLARGTVIEANLDRTRGPVATLLVQNGTLRVGDTIVAGPVLGKIRAMIDDRGNKVEEASPSFAVEILGLNEVPAAGDEFEVFENEKEARALADQRSQDLRQTRLQQAMSSRRISLSTLSAQAQEGKLKELNLILKADVQGSVEAILGSLKQLPQNEVQIRVLLAAPGEITETDVDLAAASGAVIVGFNTTLASGARQSADQEGIDIREYNIIYKLLDDIQGAMEGLLDPEEVESPLGVAEVRAVFPVGRGAVAGCYVQSGKIIRNRQLRVRRKGEVIYEGVLDSLKRMKEDAREVNAGYECGIGVSKFNDWQEGDSIEVFEMVMKRRTLSTK</sequence>
<dbReference type="EMBL" id="CP001291">
    <property type="protein sequence ID" value="ACK70778.1"/>
    <property type="molecule type" value="Genomic_DNA"/>
</dbReference>
<dbReference type="RefSeq" id="WP_015954382.1">
    <property type="nucleotide sequence ID" value="NC_011729.1"/>
</dbReference>
<dbReference type="SMR" id="B7KIU2"/>
<dbReference type="STRING" id="65393.PCC7424_2357"/>
<dbReference type="KEGG" id="cyc:PCC7424_2357"/>
<dbReference type="eggNOG" id="COG0532">
    <property type="taxonomic scope" value="Bacteria"/>
</dbReference>
<dbReference type="HOGENOM" id="CLU_006301_7_0_3"/>
<dbReference type="OrthoDB" id="9811804at2"/>
<dbReference type="Proteomes" id="UP000002384">
    <property type="component" value="Chromosome"/>
</dbReference>
<dbReference type="GO" id="GO:0005829">
    <property type="term" value="C:cytosol"/>
    <property type="evidence" value="ECO:0007669"/>
    <property type="project" value="TreeGrafter"/>
</dbReference>
<dbReference type="GO" id="GO:0005525">
    <property type="term" value="F:GTP binding"/>
    <property type="evidence" value="ECO:0007669"/>
    <property type="project" value="UniProtKB-KW"/>
</dbReference>
<dbReference type="GO" id="GO:0003924">
    <property type="term" value="F:GTPase activity"/>
    <property type="evidence" value="ECO:0007669"/>
    <property type="project" value="UniProtKB-UniRule"/>
</dbReference>
<dbReference type="GO" id="GO:0003743">
    <property type="term" value="F:translation initiation factor activity"/>
    <property type="evidence" value="ECO:0007669"/>
    <property type="project" value="UniProtKB-UniRule"/>
</dbReference>
<dbReference type="CDD" id="cd01887">
    <property type="entry name" value="IF2_eIF5B"/>
    <property type="match status" value="1"/>
</dbReference>
<dbReference type="CDD" id="cd03702">
    <property type="entry name" value="IF2_mtIF2_II"/>
    <property type="match status" value="1"/>
</dbReference>
<dbReference type="CDD" id="cd03692">
    <property type="entry name" value="mtIF2_IVc"/>
    <property type="match status" value="1"/>
</dbReference>
<dbReference type="FunFam" id="2.40.30.10:FF:000007">
    <property type="entry name" value="Translation initiation factor IF-2"/>
    <property type="match status" value="1"/>
</dbReference>
<dbReference type="FunFam" id="2.40.30.10:FF:000008">
    <property type="entry name" value="Translation initiation factor IF-2"/>
    <property type="match status" value="1"/>
</dbReference>
<dbReference type="FunFam" id="3.40.50.10050:FF:000001">
    <property type="entry name" value="Translation initiation factor IF-2"/>
    <property type="match status" value="1"/>
</dbReference>
<dbReference type="FunFam" id="3.40.50.300:FF:000019">
    <property type="entry name" value="Translation initiation factor IF-2"/>
    <property type="match status" value="1"/>
</dbReference>
<dbReference type="Gene3D" id="1.10.10.2480">
    <property type="match status" value="1"/>
</dbReference>
<dbReference type="Gene3D" id="3.40.50.300">
    <property type="entry name" value="P-loop containing nucleotide triphosphate hydrolases"/>
    <property type="match status" value="1"/>
</dbReference>
<dbReference type="Gene3D" id="2.40.30.10">
    <property type="entry name" value="Translation factors"/>
    <property type="match status" value="2"/>
</dbReference>
<dbReference type="Gene3D" id="3.40.50.10050">
    <property type="entry name" value="Translation initiation factor IF- 2, domain 3"/>
    <property type="match status" value="1"/>
</dbReference>
<dbReference type="HAMAP" id="MF_00100_B">
    <property type="entry name" value="IF_2_B"/>
    <property type="match status" value="1"/>
</dbReference>
<dbReference type="InterPro" id="IPR053905">
    <property type="entry name" value="EF-G-like_DII"/>
</dbReference>
<dbReference type="InterPro" id="IPR044145">
    <property type="entry name" value="IF2_II"/>
</dbReference>
<dbReference type="InterPro" id="IPR006847">
    <property type="entry name" value="IF2_N"/>
</dbReference>
<dbReference type="InterPro" id="IPR027417">
    <property type="entry name" value="P-loop_NTPase"/>
</dbReference>
<dbReference type="InterPro" id="IPR005225">
    <property type="entry name" value="Small_GTP-bd"/>
</dbReference>
<dbReference type="InterPro" id="IPR000795">
    <property type="entry name" value="T_Tr_GTP-bd_dom"/>
</dbReference>
<dbReference type="InterPro" id="IPR000178">
    <property type="entry name" value="TF_IF2_bacterial-like"/>
</dbReference>
<dbReference type="InterPro" id="IPR015760">
    <property type="entry name" value="TIF_IF2"/>
</dbReference>
<dbReference type="InterPro" id="IPR023115">
    <property type="entry name" value="TIF_IF2_dom3"/>
</dbReference>
<dbReference type="InterPro" id="IPR036925">
    <property type="entry name" value="TIF_IF2_dom3_sf"/>
</dbReference>
<dbReference type="InterPro" id="IPR009000">
    <property type="entry name" value="Transl_B-barrel_sf"/>
</dbReference>
<dbReference type="NCBIfam" id="TIGR00487">
    <property type="entry name" value="IF-2"/>
    <property type="match status" value="1"/>
</dbReference>
<dbReference type="NCBIfam" id="TIGR00231">
    <property type="entry name" value="small_GTP"/>
    <property type="match status" value="1"/>
</dbReference>
<dbReference type="PANTHER" id="PTHR43381:SF5">
    <property type="entry name" value="TR-TYPE G DOMAIN-CONTAINING PROTEIN"/>
    <property type="match status" value="1"/>
</dbReference>
<dbReference type="PANTHER" id="PTHR43381">
    <property type="entry name" value="TRANSLATION INITIATION FACTOR IF-2-RELATED"/>
    <property type="match status" value="1"/>
</dbReference>
<dbReference type="Pfam" id="PF22042">
    <property type="entry name" value="EF-G_D2"/>
    <property type="match status" value="1"/>
</dbReference>
<dbReference type="Pfam" id="PF00009">
    <property type="entry name" value="GTP_EFTU"/>
    <property type="match status" value="1"/>
</dbReference>
<dbReference type="Pfam" id="PF11987">
    <property type="entry name" value="IF-2"/>
    <property type="match status" value="1"/>
</dbReference>
<dbReference type="Pfam" id="PF04760">
    <property type="entry name" value="IF2_N"/>
    <property type="match status" value="2"/>
</dbReference>
<dbReference type="PRINTS" id="PR00315">
    <property type="entry name" value="ELONGATNFCT"/>
</dbReference>
<dbReference type="SUPFAM" id="SSF52156">
    <property type="entry name" value="Initiation factor IF2/eIF5b, domain 3"/>
    <property type="match status" value="1"/>
</dbReference>
<dbReference type="SUPFAM" id="SSF52540">
    <property type="entry name" value="P-loop containing nucleoside triphosphate hydrolases"/>
    <property type="match status" value="1"/>
</dbReference>
<dbReference type="SUPFAM" id="SSF50447">
    <property type="entry name" value="Translation proteins"/>
    <property type="match status" value="2"/>
</dbReference>
<dbReference type="PROSITE" id="PS51722">
    <property type="entry name" value="G_TR_2"/>
    <property type="match status" value="1"/>
</dbReference>
<dbReference type="PROSITE" id="PS01176">
    <property type="entry name" value="IF2"/>
    <property type="match status" value="1"/>
</dbReference>
<feature type="chain" id="PRO_1000190630" description="Translation initiation factor IF-2">
    <location>
        <begin position="1"/>
        <end position="1101"/>
    </location>
</feature>
<feature type="domain" description="tr-type G">
    <location>
        <begin position="592"/>
        <end position="765"/>
    </location>
</feature>
<feature type="region of interest" description="Disordered" evidence="3">
    <location>
        <begin position="81"/>
        <end position="437"/>
    </location>
</feature>
<feature type="region of interest" description="Disordered" evidence="3">
    <location>
        <begin position="452"/>
        <end position="509"/>
    </location>
</feature>
<feature type="region of interest" description="G1" evidence="1">
    <location>
        <begin position="601"/>
        <end position="608"/>
    </location>
</feature>
<feature type="region of interest" description="G2" evidence="1">
    <location>
        <begin position="626"/>
        <end position="630"/>
    </location>
</feature>
<feature type="region of interest" description="G3" evidence="1">
    <location>
        <begin position="651"/>
        <end position="654"/>
    </location>
</feature>
<feature type="region of interest" description="G4" evidence="1">
    <location>
        <begin position="705"/>
        <end position="708"/>
    </location>
</feature>
<feature type="region of interest" description="G5" evidence="1">
    <location>
        <begin position="741"/>
        <end position="743"/>
    </location>
</feature>
<feature type="compositionally biased region" description="Polar residues" evidence="3">
    <location>
        <begin position="93"/>
        <end position="108"/>
    </location>
</feature>
<feature type="compositionally biased region" description="Pro residues" evidence="3">
    <location>
        <begin position="110"/>
        <end position="124"/>
    </location>
</feature>
<feature type="compositionally biased region" description="Polar residues" evidence="3">
    <location>
        <begin position="128"/>
        <end position="149"/>
    </location>
</feature>
<feature type="compositionally biased region" description="Polar residues" evidence="3">
    <location>
        <begin position="157"/>
        <end position="184"/>
    </location>
</feature>
<feature type="compositionally biased region" description="Low complexity" evidence="3">
    <location>
        <begin position="185"/>
        <end position="196"/>
    </location>
</feature>
<feature type="compositionally biased region" description="Polar residues" evidence="3">
    <location>
        <begin position="197"/>
        <end position="206"/>
    </location>
</feature>
<feature type="compositionally biased region" description="Basic and acidic residues" evidence="3">
    <location>
        <begin position="228"/>
        <end position="237"/>
    </location>
</feature>
<feature type="compositionally biased region" description="Basic and acidic residues" evidence="3">
    <location>
        <begin position="248"/>
        <end position="288"/>
    </location>
</feature>
<feature type="compositionally biased region" description="Basic and acidic residues" evidence="3">
    <location>
        <begin position="295"/>
        <end position="340"/>
    </location>
</feature>
<feature type="compositionally biased region" description="Acidic residues" evidence="3">
    <location>
        <begin position="361"/>
        <end position="378"/>
    </location>
</feature>
<feature type="compositionally biased region" description="Basic residues" evidence="3">
    <location>
        <begin position="385"/>
        <end position="397"/>
    </location>
</feature>
<feature type="compositionally biased region" description="Basic residues" evidence="3">
    <location>
        <begin position="414"/>
        <end position="428"/>
    </location>
</feature>
<feature type="compositionally biased region" description="Basic and acidic residues" evidence="3">
    <location>
        <begin position="484"/>
        <end position="506"/>
    </location>
</feature>
<feature type="binding site" evidence="2">
    <location>
        <begin position="601"/>
        <end position="608"/>
    </location>
    <ligand>
        <name>GTP</name>
        <dbReference type="ChEBI" id="CHEBI:37565"/>
    </ligand>
</feature>
<feature type="binding site" evidence="2">
    <location>
        <begin position="651"/>
        <end position="655"/>
    </location>
    <ligand>
        <name>GTP</name>
        <dbReference type="ChEBI" id="CHEBI:37565"/>
    </ligand>
</feature>
<feature type="binding site" evidence="2">
    <location>
        <begin position="705"/>
        <end position="708"/>
    </location>
    <ligand>
        <name>GTP</name>
        <dbReference type="ChEBI" id="CHEBI:37565"/>
    </ligand>
</feature>
<evidence type="ECO:0000250" key="1"/>
<evidence type="ECO:0000255" key="2">
    <source>
        <dbReference type="HAMAP-Rule" id="MF_00100"/>
    </source>
</evidence>
<evidence type="ECO:0000256" key="3">
    <source>
        <dbReference type="SAM" id="MobiDB-lite"/>
    </source>
</evidence>
<comment type="function">
    <text evidence="2">One of the essential components for the initiation of protein synthesis. Protects formylmethionyl-tRNA from spontaneous hydrolysis and promotes its binding to the 30S ribosomal subunits. Also involved in the hydrolysis of GTP during the formation of the 70S ribosomal complex.</text>
</comment>
<comment type="subcellular location">
    <subcellularLocation>
        <location evidence="2">Cytoplasm</location>
    </subcellularLocation>
</comment>
<comment type="similarity">
    <text evidence="2">Belongs to the TRAFAC class translation factor GTPase superfamily. Classic translation factor GTPase family. IF-2 subfamily.</text>
</comment>